<protein>
    <recommendedName>
        <fullName>Uncharacterized protein MPN_048</fullName>
    </recommendedName>
</protein>
<evidence type="ECO:0000305" key="1"/>
<keyword id="KW-1185">Reference proteome</keyword>
<name>Y048_MYCPN</name>
<sequence length="518" mass="58873">MNELQTKVNEANNIFPVEAFKVPKVPEKLFGFVNQGFFPKLNPKGLNIADNVASLFEQYSLKQASLKDFDILLEKKNDIVLEHKVRYNFALQFHFETTYVGTGGEINLQFALQASTTNFSSLEELQASFSKTGDNLTAQLFWKPTVTKLVSGENDLTHIAQTAIGESLFDSRVDLSASIINSEATLKTAEATFTTQVLNPFKAEREKALAIKKAEEEKIKKELEEQKKRQEELSKQQRDKEALQKSLWNFQEFISYWTGQGKDVKQKEQFIQALEAAFSTNWNEVFNLLIAGFRSAIQTYYKDGKADQSQNAKIAFGEKGIQFPKSGPGLDGIFMSDFLRGNLTGNAHFDLKLKKVEVKNTQGKDAQGNDKKASINWQAKQNNFPFRQVNPWDFSFEVELKYEGSYGLYPGARFLNLFGSLGIPNDWKGEMSVKFVLDGKTPQWIADKPDYPGSLFKFEKNQLKFTPHVKEHVHVENKQFMEKLKSQNLHNLELATGATKPPVVDLASYLHYLILNHK</sequence>
<gene>
    <name type="ordered locus">MPN_048</name>
    <name type="ORF">D09_orf518</name>
    <name type="ORF">MP106</name>
</gene>
<proteinExistence type="inferred from homology"/>
<feature type="chain" id="PRO_0000215252" description="Uncharacterized protein MPN_048">
    <location>
        <begin position="1"/>
        <end position="518"/>
    </location>
</feature>
<reference key="1">
    <citation type="journal article" date="1996" name="Nucleic Acids Res.">
        <title>Complete sequence analysis of the genome of the bacterium Mycoplasma pneumoniae.</title>
        <authorList>
            <person name="Himmelreich R."/>
            <person name="Hilbert H."/>
            <person name="Plagens H."/>
            <person name="Pirkl E."/>
            <person name="Li B.-C."/>
            <person name="Herrmann R."/>
        </authorList>
    </citation>
    <scope>NUCLEOTIDE SEQUENCE [LARGE SCALE GENOMIC DNA]</scope>
    <source>
        <strain>ATCC 29342 / M129 / Subtype 1</strain>
    </source>
</reference>
<organism>
    <name type="scientific">Mycoplasma pneumoniae (strain ATCC 29342 / M129 / Subtype 1)</name>
    <name type="common">Mycoplasmoides pneumoniae</name>
    <dbReference type="NCBI Taxonomy" id="272634"/>
    <lineage>
        <taxon>Bacteria</taxon>
        <taxon>Bacillati</taxon>
        <taxon>Mycoplasmatota</taxon>
        <taxon>Mycoplasmoidales</taxon>
        <taxon>Mycoplasmoidaceae</taxon>
        <taxon>Mycoplasmoides</taxon>
    </lineage>
</organism>
<comment type="similarity">
    <text evidence="1">Belongs to the MG032/MG096/MG288 family.</text>
</comment>
<accession>P75066</accession>
<dbReference type="EMBL" id="U00089">
    <property type="protein sequence ID" value="AAB95754.1"/>
    <property type="molecule type" value="Genomic_DNA"/>
</dbReference>
<dbReference type="PIR" id="S73432">
    <property type="entry name" value="S73432"/>
</dbReference>
<dbReference type="RefSeq" id="NP_109736.1">
    <property type="nucleotide sequence ID" value="NC_000912.1"/>
</dbReference>
<dbReference type="SMR" id="P75066"/>
<dbReference type="IntAct" id="P75066">
    <property type="interactions" value="2"/>
</dbReference>
<dbReference type="EnsemblBacteria" id="AAB95754">
    <property type="protein sequence ID" value="AAB95754"/>
    <property type="gene ID" value="MPN_048"/>
</dbReference>
<dbReference type="KEGG" id="mpn:MPN_048"/>
<dbReference type="PATRIC" id="fig|272634.6.peg.48"/>
<dbReference type="HOGENOM" id="CLU_029253_0_0_14"/>
<dbReference type="OrthoDB" id="403320at2"/>
<dbReference type="BioCyc" id="MPNE272634:G1GJ3-70-MONOMER"/>
<dbReference type="Proteomes" id="UP000000808">
    <property type="component" value="Chromosome"/>
</dbReference>
<dbReference type="InterPro" id="IPR004306">
    <property type="entry name" value="DUF237"/>
</dbReference>
<dbReference type="InterPro" id="IPR004319">
    <property type="entry name" value="DUF240"/>
</dbReference>
<dbReference type="Pfam" id="PF03072">
    <property type="entry name" value="DUF237"/>
    <property type="match status" value="1"/>
</dbReference>
<dbReference type="Pfam" id="PF03086">
    <property type="entry name" value="DUF240"/>
    <property type="match status" value="1"/>
</dbReference>